<dbReference type="EC" id="2.3.2.27" evidence="2"/>
<dbReference type="EMBL" id="BC099079">
    <property type="protein sequence ID" value="AAH99079.1"/>
    <property type="molecule type" value="mRNA"/>
</dbReference>
<dbReference type="RefSeq" id="NP_001020898.1">
    <property type="nucleotide sequence ID" value="NM_001025727.1"/>
</dbReference>
<dbReference type="RefSeq" id="XP_063135300.1">
    <property type="nucleotide sequence ID" value="XM_063279230.1"/>
</dbReference>
<dbReference type="SMR" id="Q4KLN8"/>
<dbReference type="BioGRID" id="262979">
    <property type="interactions" value="10"/>
</dbReference>
<dbReference type="FunCoup" id="Q4KLN8">
    <property type="interactions" value="2096"/>
</dbReference>
<dbReference type="IntAct" id="Q4KLN8">
    <property type="interactions" value="10"/>
</dbReference>
<dbReference type="MINT" id="Q4KLN8"/>
<dbReference type="STRING" id="10116.ENSRNOP00000059852"/>
<dbReference type="PhosphoSitePlus" id="Q4KLN8"/>
<dbReference type="PaxDb" id="10116-ENSRNOP00000059852"/>
<dbReference type="Ensembl" id="ENSRNOT00000065629.3">
    <property type="protein sequence ID" value="ENSRNOP00000059852.1"/>
    <property type="gene ID" value="ENSRNOG00000047171.3"/>
</dbReference>
<dbReference type="GeneID" id="361815"/>
<dbReference type="KEGG" id="rno:361815"/>
<dbReference type="UCSC" id="RGD:1308035">
    <property type="organism name" value="rat"/>
</dbReference>
<dbReference type="AGR" id="RGD:1308035"/>
<dbReference type="CTD" id="9025"/>
<dbReference type="RGD" id="1308035">
    <property type="gene designation" value="Rnf8"/>
</dbReference>
<dbReference type="eggNOG" id="KOG3872">
    <property type="taxonomic scope" value="Eukaryota"/>
</dbReference>
<dbReference type="GeneTree" id="ENSGT00400000022349"/>
<dbReference type="HOGENOM" id="CLU_023453_1_0_1"/>
<dbReference type="InParanoid" id="Q4KLN8"/>
<dbReference type="OMA" id="TMISRCH"/>
<dbReference type="Reactome" id="R-RNO-5693565">
    <property type="pathway name" value="Recruitment and ATM-mediated phosphorylation of repair and signaling proteins at DNA double strand breaks"/>
</dbReference>
<dbReference type="Reactome" id="R-RNO-5693571">
    <property type="pathway name" value="Nonhomologous End-Joining (NHEJ)"/>
</dbReference>
<dbReference type="Reactome" id="R-RNO-5693607">
    <property type="pathway name" value="Processing of DNA double-strand break ends"/>
</dbReference>
<dbReference type="Reactome" id="R-RNO-69473">
    <property type="pathway name" value="G2/M DNA damage checkpoint"/>
</dbReference>
<dbReference type="UniPathway" id="UPA00143"/>
<dbReference type="PRO" id="PR:Q4KLN8"/>
<dbReference type="Proteomes" id="UP000002494">
    <property type="component" value="Chromosome 20"/>
</dbReference>
<dbReference type="Bgee" id="ENSRNOG00000047171">
    <property type="expression patterns" value="Expressed in cerebellum and 20 other cell types or tissues"/>
</dbReference>
<dbReference type="ExpressionAtlas" id="Q4KLN8">
    <property type="expression patterns" value="baseline and differential"/>
</dbReference>
<dbReference type="GO" id="GO:0000781">
    <property type="term" value="C:chromosome, telomeric region"/>
    <property type="evidence" value="ECO:0000250"/>
    <property type="project" value="UniProtKB"/>
</dbReference>
<dbReference type="GO" id="GO:0005737">
    <property type="term" value="C:cytoplasm"/>
    <property type="evidence" value="ECO:0000250"/>
    <property type="project" value="UniProtKB"/>
</dbReference>
<dbReference type="GO" id="GO:0005829">
    <property type="term" value="C:cytosol"/>
    <property type="evidence" value="ECO:0000318"/>
    <property type="project" value="GO_Central"/>
</dbReference>
<dbReference type="GO" id="GO:0030496">
    <property type="term" value="C:midbody"/>
    <property type="evidence" value="ECO:0007669"/>
    <property type="project" value="UniProtKB-SubCell"/>
</dbReference>
<dbReference type="GO" id="GO:0005634">
    <property type="term" value="C:nucleus"/>
    <property type="evidence" value="ECO:0000250"/>
    <property type="project" value="UniProtKB"/>
</dbReference>
<dbReference type="GO" id="GO:0035861">
    <property type="term" value="C:site of double-strand break"/>
    <property type="evidence" value="ECO:0000250"/>
    <property type="project" value="UniProtKB"/>
</dbReference>
<dbReference type="GO" id="GO:0000151">
    <property type="term" value="C:ubiquitin ligase complex"/>
    <property type="evidence" value="ECO:0000250"/>
    <property type="project" value="UniProtKB"/>
</dbReference>
<dbReference type="GO" id="GO:0003682">
    <property type="term" value="F:chromatin binding"/>
    <property type="evidence" value="ECO:0000250"/>
    <property type="project" value="UniProtKB"/>
</dbReference>
<dbReference type="GO" id="GO:0042393">
    <property type="term" value="F:histone binding"/>
    <property type="evidence" value="ECO:0000250"/>
    <property type="project" value="UniProtKB"/>
</dbReference>
<dbReference type="GO" id="GO:0042802">
    <property type="term" value="F:identical protein binding"/>
    <property type="evidence" value="ECO:0000266"/>
    <property type="project" value="RGD"/>
</dbReference>
<dbReference type="GO" id="GO:0042803">
    <property type="term" value="F:protein homodimerization activity"/>
    <property type="evidence" value="ECO:0000250"/>
    <property type="project" value="UniProtKB"/>
</dbReference>
<dbReference type="GO" id="GO:0043130">
    <property type="term" value="F:ubiquitin binding"/>
    <property type="evidence" value="ECO:0007669"/>
    <property type="project" value="UniProtKB-UniRule"/>
</dbReference>
<dbReference type="GO" id="GO:0061630">
    <property type="term" value="F:ubiquitin protein ligase activity"/>
    <property type="evidence" value="ECO:0000250"/>
    <property type="project" value="UniProtKB"/>
</dbReference>
<dbReference type="GO" id="GO:0031625">
    <property type="term" value="F:ubiquitin protein ligase binding"/>
    <property type="evidence" value="ECO:0000266"/>
    <property type="project" value="RGD"/>
</dbReference>
<dbReference type="GO" id="GO:0004842">
    <property type="term" value="F:ubiquitin-protein transferase activity"/>
    <property type="evidence" value="ECO:0000266"/>
    <property type="project" value="RGD"/>
</dbReference>
<dbReference type="GO" id="GO:0008270">
    <property type="term" value="F:zinc ion binding"/>
    <property type="evidence" value="ECO:0000250"/>
    <property type="project" value="UniProtKB"/>
</dbReference>
<dbReference type="GO" id="GO:0051301">
    <property type="term" value="P:cell division"/>
    <property type="evidence" value="ECO:0007669"/>
    <property type="project" value="UniProtKB-KW"/>
</dbReference>
<dbReference type="GO" id="GO:0006974">
    <property type="term" value="P:DNA damage response"/>
    <property type="evidence" value="ECO:0000250"/>
    <property type="project" value="UniProtKB"/>
</dbReference>
<dbReference type="GO" id="GO:0140861">
    <property type="term" value="P:DNA repair-dependent chromatin remodeling"/>
    <property type="evidence" value="ECO:0000250"/>
    <property type="project" value="UniProtKB"/>
</dbReference>
<dbReference type="GO" id="GO:0006302">
    <property type="term" value="P:double-strand break repair"/>
    <property type="evidence" value="ECO:0000250"/>
    <property type="project" value="UniProtKB"/>
</dbReference>
<dbReference type="GO" id="GO:0006303">
    <property type="term" value="P:double-strand break repair via nonhomologous end joining"/>
    <property type="evidence" value="ECO:0000250"/>
    <property type="project" value="UniProtKB"/>
</dbReference>
<dbReference type="GO" id="GO:0040029">
    <property type="term" value="P:epigenetic regulation of gene expression"/>
    <property type="evidence" value="ECO:0000250"/>
    <property type="project" value="UniProtKB"/>
</dbReference>
<dbReference type="GO" id="GO:0045190">
    <property type="term" value="P:isotype switching"/>
    <property type="evidence" value="ECO:0000250"/>
    <property type="project" value="UniProtKB"/>
</dbReference>
<dbReference type="GO" id="GO:0034244">
    <property type="term" value="P:negative regulation of transcription elongation by RNA polymerase II"/>
    <property type="evidence" value="ECO:0000250"/>
    <property type="project" value="UniProtKB"/>
</dbReference>
<dbReference type="GO" id="GO:0045739">
    <property type="term" value="P:positive regulation of DNA repair"/>
    <property type="evidence" value="ECO:0000250"/>
    <property type="project" value="UniProtKB"/>
</dbReference>
<dbReference type="GO" id="GO:1905168">
    <property type="term" value="P:positive regulation of double-strand break repair via homologous recombination"/>
    <property type="evidence" value="ECO:0000250"/>
    <property type="project" value="UniProtKB"/>
</dbReference>
<dbReference type="GO" id="GO:0051865">
    <property type="term" value="P:protein autoubiquitination"/>
    <property type="evidence" value="ECO:0000266"/>
    <property type="project" value="RGD"/>
</dbReference>
<dbReference type="GO" id="GO:0070936">
    <property type="term" value="P:protein K48-linked ubiquitination"/>
    <property type="evidence" value="ECO:0000250"/>
    <property type="project" value="UniProtKB"/>
</dbReference>
<dbReference type="GO" id="GO:0085020">
    <property type="term" value="P:protein K6-linked ubiquitination"/>
    <property type="evidence" value="ECO:0000250"/>
    <property type="project" value="UniProtKB"/>
</dbReference>
<dbReference type="GO" id="GO:0070534">
    <property type="term" value="P:protein K63-linked ubiquitination"/>
    <property type="evidence" value="ECO:0000250"/>
    <property type="project" value="UniProtKB"/>
</dbReference>
<dbReference type="GO" id="GO:0010212">
    <property type="term" value="P:response to ionizing radiation"/>
    <property type="evidence" value="ECO:0000250"/>
    <property type="project" value="UniProtKB"/>
</dbReference>
<dbReference type="GO" id="GO:0042770">
    <property type="term" value="P:signal transduction in response to DNA damage"/>
    <property type="evidence" value="ECO:0000266"/>
    <property type="project" value="RGD"/>
</dbReference>
<dbReference type="GO" id="GO:0035092">
    <property type="term" value="P:sperm DNA condensation"/>
    <property type="evidence" value="ECO:0000250"/>
    <property type="project" value="UniProtKB"/>
</dbReference>
<dbReference type="GO" id="GO:0006511">
    <property type="term" value="P:ubiquitin-dependent protein catabolic process"/>
    <property type="evidence" value="ECO:0000250"/>
    <property type="project" value="UniProtKB"/>
</dbReference>
<dbReference type="CDD" id="cd22663">
    <property type="entry name" value="FHA_RNF8"/>
    <property type="match status" value="1"/>
</dbReference>
<dbReference type="CDD" id="cd16535">
    <property type="entry name" value="RING-HC_RNF8"/>
    <property type="match status" value="1"/>
</dbReference>
<dbReference type="FunFam" id="1.20.5.170:FF:000050">
    <property type="entry name" value="E3 ubiquitin-protein ligase RNF8"/>
    <property type="match status" value="1"/>
</dbReference>
<dbReference type="FunFam" id="2.60.200.20:FF:000015">
    <property type="entry name" value="E3 ubiquitin-protein ligase RNF8"/>
    <property type="match status" value="1"/>
</dbReference>
<dbReference type="FunFam" id="3.30.40.10:FF:000242">
    <property type="entry name" value="E3 ubiquitin-protein ligase RNF8"/>
    <property type="match status" value="1"/>
</dbReference>
<dbReference type="Gene3D" id="1.20.5.170">
    <property type="match status" value="1"/>
</dbReference>
<dbReference type="Gene3D" id="2.60.200.20">
    <property type="match status" value="1"/>
</dbReference>
<dbReference type="Gene3D" id="3.30.40.10">
    <property type="entry name" value="Zinc/RING finger domain, C3HC4 (zinc finger)"/>
    <property type="match status" value="1"/>
</dbReference>
<dbReference type="HAMAP" id="MF_03067">
    <property type="entry name" value="RNF8"/>
    <property type="match status" value="1"/>
</dbReference>
<dbReference type="InterPro" id="IPR000253">
    <property type="entry name" value="FHA_dom"/>
</dbReference>
<dbReference type="InterPro" id="IPR017335">
    <property type="entry name" value="RNF8"/>
</dbReference>
<dbReference type="InterPro" id="IPR008984">
    <property type="entry name" value="SMAD_FHA_dom_sf"/>
</dbReference>
<dbReference type="InterPro" id="IPR018957">
    <property type="entry name" value="Znf_C3HC4_RING-type"/>
</dbReference>
<dbReference type="InterPro" id="IPR001841">
    <property type="entry name" value="Znf_RING"/>
</dbReference>
<dbReference type="InterPro" id="IPR013083">
    <property type="entry name" value="Znf_RING/FYVE/PHD"/>
</dbReference>
<dbReference type="InterPro" id="IPR017907">
    <property type="entry name" value="Znf_RING_CS"/>
</dbReference>
<dbReference type="PANTHER" id="PTHR15067">
    <property type="entry name" value="E3 UBIQUITIN-PROTEIN LIGASE RNF8"/>
    <property type="match status" value="1"/>
</dbReference>
<dbReference type="PANTHER" id="PTHR15067:SF4">
    <property type="entry name" value="E3 UBIQUITIN-PROTEIN LIGASE RNF8"/>
    <property type="match status" value="1"/>
</dbReference>
<dbReference type="Pfam" id="PF00498">
    <property type="entry name" value="FHA"/>
    <property type="match status" value="1"/>
</dbReference>
<dbReference type="Pfam" id="PF00097">
    <property type="entry name" value="zf-C3HC4"/>
    <property type="match status" value="1"/>
</dbReference>
<dbReference type="PIRSF" id="PIRSF037950">
    <property type="entry name" value="E3_ubiquit_lig_RNF8"/>
    <property type="match status" value="1"/>
</dbReference>
<dbReference type="SMART" id="SM00240">
    <property type="entry name" value="FHA"/>
    <property type="match status" value="1"/>
</dbReference>
<dbReference type="SMART" id="SM00184">
    <property type="entry name" value="RING"/>
    <property type="match status" value="1"/>
</dbReference>
<dbReference type="SUPFAM" id="SSF57850">
    <property type="entry name" value="RING/U-box"/>
    <property type="match status" value="1"/>
</dbReference>
<dbReference type="SUPFAM" id="SSF49879">
    <property type="entry name" value="SMAD/FHA domain"/>
    <property type="match status" value="1"/>
</dbReference>
<dbReference type="PROSITE" id="PS50006">
    <property type="entry name" value="FHA_DOMAIN"/>
    <property type="match status" value="1"/>
</dbReference>
<dbReference type="PROSITE" id="PS00518">
    <property type="entry name" value="ZF_RING_1"/>
    <property type="match status" value="1"/>
</dbReference>
<dbReference type="PROSITE" id="PS50089">
    <property type="entry name" value="ZF_RING_2"/>
    <property type="match status" value="1"/>
</dbReference>
<gene>
    <name evidence="2" type="primary">Rnf8</name>
</gene>
<organism>
    <name type="scientific">Rattus norvegicus</name>
    <name type="common">Rat</name>
    <dbReference type="NCBI Taxonomy" id="10116"/>
    <lineage>
        <taxon>Eukaryota</taxon>
        <taxon>Metazoa</taxon>
        <taxon>Chordata</taxon>
        <taxon>Craniata</taxon>
        <taxon>Vertebrata</taxon>
        <taxon>Euteleostomi</taxon>
        <taxon>Mammalia</taxon>
        <taxon>Eutheria</taxon>
        <taxon>Euarchontoglires</taxon>
        <taxon>Glires</taxon>
        <taxon>Rodentia</taxon>
        <taxon>Myomorpha</taxon>
        <taxon>Muroidea</taxon>
        <taxon>Muridae</taxon>
        <taxon>Murinae</taxon>
        <taxon>Rattus</taxon>
    </lineage>
</organism>
<proteinExistence type="evidence at transcript level"/>
<comment type="function">
    <text evidence="1 2">E3 ubiquitin-protein ligase that plays a key role in DNA damage signaling via 2 distinct roles: by mediating the 'Lys-63'-linked ubiquitination of histones H2A and H2AX and promoting the recruitment of DNA repair proteins at double-strand breaks (DSBs) sites, and by catalyzing 'Lys-48'-linked ubiquitination to remove target proteins from DNA damage sites. Following DNA DSBs, it is recruited to the sites of damage by ATM-phosphorylated MDC1 and catalyzes the 'Lys-63'-linked ubiquitination of histones H2A and H2AX, thereby promoting the formation of TP53BP1 and BRCA1 ionizing radiation-induced foci (IRIF). Also controls the recruitment of UIMC1-BRCC3 (RAP80-BRCC36) and PAXIP1/PTIP to DNA damage sites. Promotes the recruitment of NBN to DNA damage sites by catalyzing 'Lys-6'-linked ubiquitination of NBN. Also recruited at DNA interstrand cross-links (ICLs) sites and catalyzes 'Lys-63'-linked ubiquitination of histones H2A and H2AX, leading to recruitment of FAAP20 and Fanconi anemia (FA) complex, followed by interstrand cross-link repair. H2A ubiquitination also mediates the ATM-dependent transcriptional silencing at regions flanking DSBs in cis, a mechanism to avoid collision between transcription and repair intermediates. Promotes the formation of 'Lys-63'-linked polyubiquitin chains via interactions with the specific ubiquitin-conjugating UBE2N/UBC13 and ubiquitinates non-histone substrates such as PCNA. Substrates that are polyubiquitinated at 'Lys-63' are usually not targeted for degradation. Also catalyzes the formation of 'Lys-48'-linked polyubiquitin chains via interaction with the ubiquitin-conjugating UBE2L6/UBCH8, leading to degradation of substrate proteins such as CHEK2, JMJD2A/KDM4A and KU80/XRCC5: it is still unclear how the preference toward 'Lys-48'- versus 'Lys-63'-linked ubiquitination is regulated but it could be due to RNF8 ability to interact with specific E2 specific ligases. For instance, interaction with phosphorylated HERC2 promotes the association between RNF8 and UBE2N/UBC13 and favors the specific formation of 'Lys-63'-linked ubiquitin chains. Promotes non-homologous end joining (NHEJ) by promoting the 'Lys-48'-linked ubiquitination and degradation the of KU80/XRCC5. Following DNA damage, mediates the ubiquitination and degradation of JMJD2A/KDM4A in collaboration with RNF168, leading to unmask H4K20me2 mark and promote the recruitment of TP53BP1 at DNA damage sites (By similarity). Following DNA damage, mediates the ubiquitination and degradation of POLD4/p12, a subunit of DNA polymerase delta. In the absence of POLD4, DNA polymerase delta complex exhibits higher proofreading activity (By similarity). In addition to its function in damage signaling, also plays a role in higher-order chromatin structure by mediating extensive chromatin decondensation. Involved in the activation of ATM by promoting histone H2B ubiquitination, which indirectly triggers histone H4 'Lys-16' acetylation (H4K16ac), establishing a chromatin environment that promotes efficient activation of ATM kinase. Required in the testis, where it plays a role in the replacement of histones during spermatogenesis. At uncapped telomeres, promotes the joining of deprotected chromosome ends by inducing H2A ubiquitination and TP53BP1 recruitment, suggesting that it may enhance cancer development by aggravating telomere-induced genome instability in case of telomeric crisis. Promotes the assembly of RAD51 at DNA DSBs in the absence of BRCA1 and TP53BP1 Also involved in class switch recombination in immune system, via its role in regulation of DSBs repair. May be required for proper exit from mitosis after spindle checkpoint activation and may regulate cytokinesis. May play a role in the regulation of RXRA-mediated transcriptional activity. Not involved in RXRA ubiquitination by UBE2E2 (By similarity).</text>
</comment>
<comment type="catalytic activity">
    <reaction evidence="2">
        <text>S-ubiquitinyl-[E2 ubiquitin-conjugating enzyme]-L-cysteine + [acceptor protein]-L-lysine = [E2 ubiquitin-conjugating enzyme]-L-cysteine + N(6)-ubiquitinyl-[acceptor protein]-L-lysine.</text>
        <dbReference type="EC" id="2.3.2.27"/>
    </reaction>
</comment>
<comment type="pathway">
    <text evidence="2">Protein modification; protein ubiquitination.</text>
</comment>
<comment type="subunit">
    <text evidence="2">Homodimer. Forms a E2-E3 ubiquitin ligase complex composed of the RNF8 homodimer and a E2 heterodimer of UBE2N and UBE2V2. Interacts with class III E2s, including UBE2E1, UBE2E2, and UBE2E3 and with UBE2N. Interacts with RXRA. Interacts (via FHA domain) with phosphorylated HERC2 (via C-terminus). Interacts with PIWIL1; leading to sequester RNF8 in the cytoplasm. Interacts with WRAP53/TCAB1.</text>
</comment>
<comment type="subcellular location">
    <subcellularLocation>
        <location evidence="2">Nucleus</location>
    </subcellularLocation>
    <subcellularLocation>
        <location evidence="2">Cytoplasm</location>
    </subcellularLocation>
    <subcellularLocation>
        <location evidence="2">Midbody</location>
    </subcellularLocation>
    <subcellularLocation>
        <location evidence="2">Chromosome</location>
        <location evidence="2">Telomere</location>
    </subcellularLocation>
    <text evidence="2">Recruited at uncapped telomeres. Following DNA double-strand breaks, recruited to the sites of damage. During prophase, concomitant with nuclear envelope breakdown, localizes throughout the cell, with a dotted pattern. In telophase, again in the nucleus and also with a discrete dotted pattern in the cytoplasm. In late telophase and during cytokinesis, localizes in the midbody of the tubulin bridge joining the daughter cells. Does not seem to be associated with condensed chromosomes at any time during the cell cycle. During spermatogenesis, sequestered in the cytoplasm by PIWIL1: RNF8 is released following ubiquitination and degradation of PIWIL1.</text>
</comment>
<comment type="domain">
    <text evidence="1 2">The FHA domain specifically recognizes and binds ATM-phosphorylated MDC1 and phosphorylated HERC2 (By similarity). This domain is also required for proper recruitment to DNA damage sites after UV irradiation, ionizing radiation, or treatment with an alkylating agent (By similarity).</text>
</comment>
<comment type="PTM">
    <text evidence="2">Autoubiquitinated through 'Lys-48' and 'Lys-63' of ubiquitin. 'Lys-63' polyubiquitination is mediated by UBE2N. 'Lys-29'-type polyubiquitination is also observed, but it doesn't require its own functional RING-type zinc finger.</text>
</comment>
<comment type="similarity">
    <text evidence="2">Belongs to the RNF8 family.</text>
</comment>
<comment type="caution">
    <text evidence="2">According to a well-established model, RNF8 initiate H2A 'Lys-63'-linked ubiquitination leading to recruitment of RNF168 to amplify H2A 'Lys-63'-linked ubiquitination. However, other data suggest that RNF168 is the priming ubiquitin ligase by mediating monoubiquitination of 'Lys-13' and 'Lys-15' of nucleosomal histone H2A (H2AK13Ub and H2AK15Ub respectively). These data suggest that RNF168 might be recruited to DSBs sites in a RNF8-dependent manner by binding to non-histone proteins ubiquitinated via 'Lys-63'-linked and initiates monoubiquitination of H2A, which is then amplified by RNF8. Additional evidence is however required to confirm these data.</text>
</comment>
<accession>Q4KLN8</accession>
<protein>
    <recommendedName>
        <fullName evidence="2">E3 ubiquitin-protein ligase RNF8</fullName>
        <ecNumber evidence="2">2.3.2.27</ecNumber>
    </recommendedName>
    <alternativeName>
        <fullName evidence="2">RING finger protein 8</fullName>
    </alternativeName>
    <alternativeName>
        <fullName evidence="2">RING-type E3 ubiquitin transferase RNF8</fullName>
    </alternativeName>
</protein>
<reference key="1">
    <citation type="journal article" date="2004" name="Genome Res.">
        <title>The status, quality, and expansion of the NIH full-length cDNA project: the Mammalian Gene Collection (MGC).</title>
        <authorList>
            <consortium name="The MGC Project Team"/>
        </authorList>
    </citation>
    <scope>NUCLEOTIDE SEQUENCE [LARGE SCALE MRNA]</scope>
    <source>
        <tissue>Placenta</tissue>
    </source>
</reference>
<evidence type="ECO:0000250" key="1">
    <source>
        <dbReference type="UniProtKB" id="O76064"/>
    </source>
</evidence>
<evidence type="ECO:0000255" key="2">
    <source>
        <dbReference type="HAMAP-Rule" id="MF_03067"/>
    </source>
</evidence>
<evidence type="ECO:0000256" key="3">
    <source>
        <dbReference type="SAM" id="MobiDB-lite"/>
    </source>
</evidence>
<keyword id="KW-0131">Cell cycle</keyword>
<keyword id="KW-0132">Cell division</keyword>
<keyword id="KW-0156">Chromatin regulator</keyword>
<keyword id="KW-0158">Chromosome</keyword>
<keyword id="KW-0963">Cytoplasm</keyword>
<keyword id="KW-0227">DNA damage</keyword>
<keyword id="KW-0234">DNA repair</keyword>
<keyword id="KW-0479">Metal-binding</keyword>
<keyword id="KW-0498">Mitosis</keyword>
<keyword id="KW-0539">Nucleus</keyword>
<keyword id="KW-0597">Phosphoprotein</keyword>
<keyword id="KW-1185">Reference proteome</keyword>
<keyword id="KW-0779">Telomere</keyword>
<keyword id="KW-0808">Transferase</keyword>
<keyword id="KW-0832">Ubl conjugation</keyword>
<keyword id="KW-0833">Ubl conjugation pathway</keyword>
<keyword id="KW-0862">Zinc</keyword>
<keyword id="KW-0863">Zinc-finger</keyword>
<name>RNF8_RAT</name>
<sequence length="487" mass="55615">MGEPDPLVSGQLAARRSWCLRRLGMDREWLQLEAGSEVTIGRGFSVTYQLISKVCPLMISRNHCVLKQNPEGQWTIMDNKSLNGVWLNRERLAPLQGYCIRKGDHIQLGVPLESKEHAEYEYEVIEEDRESLAPCLAPKNDHTTEKHKGLRTKRKFSSDGVESLPAEGPSDLRCPLAKGSSKPAEPEKLHGKGEAASQPLGCLCPTLASLEASERTAGPHACSTLPKVLELYPKKQKACSPSASQSSLELFKMTMSRMLKLKTQMQEKQIAVLNVKRQARKGSSKKVVRMEKELRDLQSQLYAEQAQQQARVEQLEKTFQEEEQHLQGLEKEQGECDLKQQLLQALQEHRALMEELDRSKKDFEKIIQAKNKELERTKEEKDKVQAQKEEVLSHMNDVLENELQCIICSEYFIEAVTLNCAHSFCSFCISEWMKRKVECPICRKDIESRTNSLVLDNCISKMVERLSSDVKERRSVLIRERRAKRLL</sequence>
<feature type="chain" id="PRO_0000367277" description="E3 ubiquitin-protein ligase RNF8">
    <location>
        <begin position="1"/>
        <end position="487"/>
    </location>
</feature>
<feature type="domain" description="FHA" evidence="2">
    <location>
        <begin position="38"/>
        <end position="92"/>
    </location>
</feature>
<feature type="zinc finger region" description="RING-type" evidence="2">
    <location>
        <begin position="405"/>
        <end position="443"/>
    </location>
</feature>
<feature type="region of interest" description="Required for interaction with PIWIL1" evidence="2">
    <location>
        <begin position="68"/>
        <end position="72"/>
    </location>
</feature>
<feature type="region of interest" description="Disordered" evidence="3">
    <location>
        <begin position="135"/>
        <end position="195"/>
    </location>
</feature>
<feature type="compositionally biased region" description="Basic and acidic residues" evidence="3">
    <location>
        <begin position="184"/>
        <end position="193"/>
    </location>
</feature>
<feature type="modified residue" description="Phosphoserine" evidence="1">
    <location>
        <position position="157"/>
    </location>
</feature>